<reference key="1">
    <citation type="journal article" date="2004" name="Nucleic Acids Res.">
        <title>The genome sequence of Bacillus cereus ATCC 10987 reveals metabolic adaptations and a large plasmid related to Bacillus anthracis pXO1.</title>
        <authorList>
            <person name="Rasko D.A."/>
            <person name="Ravel J."/>
            <person name="Oekstad O.A."/>
            <person name="Helgason E."/>
            <person name="Cer R.Z."/>
            <person name="Jiang L."/>
            <person name="Shores K.A."/>
            <person name="Fouts D.E."/>
            <person name="Tourasse N.J."/>
            <person name="Angiuoli S.V."/>
            <person name="Kolonay J.F."/>
            <person name="Nelson W.C."/>
            <person name="Kolstoe A.-B."/>
            <person name="Fraser C.M."/>
            <person name="Read T.D."/>
        </authorList>
    </citation>
    <scope>NUCLEOTIDE SEQUENCE [LARGE SCALE GENOMIC DNA]</scope>
    <source>
        <strain>ATCC 10987 / NRS 248</strain>
    </source>
</reference>
<accession>Q732P6</accession>
<name>ISPT_BACC1</name>
<proteinExistence type="inferred from homology"/>
<gene>
    <name evidence="1" type="primary">uppS</name>
    <name type="ordered locus">BCE_3864</name>
</gene>
<comment type="function">
    <text evidence="1">Catalyzes the condensation of isopentenyl diphosphate (IPP) with allylic pyrophosphates generating different type of terpenoids.</text>
</comment>
<comment type="cofactor">
    <cofactor evidence="1">
        <name>Mg(2+)</name>
        <dbReference type="ChEBI" id="CHEBI:18420"/>
    </cofactor>
    <text evidence="1">Binds 2 magnesium ions per subunit.</text>
</comment>
<comment type="subunit">
    <text evidence="1">Homodimer.</text>
</comment>
<comment type="similarity">
    <text evidence="1">Belongs to the UPP synthase family.</text>
</comment>
<organism>
    <name type="scientific">Bacillus cereus (strain ATCC 10987 / NRS 248)</name>
    <dbReference type="NCBI Taxonomy" id="222523"/>
    <lineage>
        <taxon>Bacteria</taxon>
        <taxon>Bacillati</taxon>
        <taxon>Bacillota</taxon>
        <taxon>Bacilli</taxon>
        <taxon>Bacillales</taxon>
        <taxon>Bacillaceae</taxon>
        <taxon>Bacillus</taxon>
        <taxon>Bacillus cereus group</taxon>
    </lineage>
</organism>
<dbReference type="EC" id="2.5.1.-" evidence="1"/>
<dbReference type="EMBL" id="AE017194">
    <property type="protein sequence ID" value="AAS42769.1"/>
    <property type="molecule type" value="Genomic_DNA"/>
</dbReference>
<dbReference type="SMR" id="Q732P6"/>
<dbReference type="KEGG" id="bca:BCE_3864"/>
<dbReference type="HOGENOM" id="CLU_038505_1_1_9"/>
<dbReference type="Proteomes" id="UP000002527">
    <property type="component" value="Chromosome"/>
</dbReference>
<dbReference type="GO" id="GO:0005829">
    <property type="term" value="C:cytosol"/>
    <property type="evidence" value="ECO:0007669"/>
    <property type="project" value="TreeGrafter"/>
</dbReference>
<dbReference type="GO" id="GO:0008834">
    <property type="term" value="F:ditrans,polycis-undecaprenyl-diphosphate synthase [(2E,6E)-farnesyl-diphosphate specific] activity"/>
    <property type="evidence" value="ECO:0007669"/>
    <property type="project" value="TreeGrafter"/>
</dbReference>
<dbReference type="GO" id="GO:0000287">
    <property type="term" value="F:magnesium ion binding"/>
    <property type="evidence" value="ECO:0007669"/>
    <property type="project" value="UniProtKB-UniRule"/>
</dbReference>
<dbReference type="GO" id="GO:0030145">
    <property type="term" value="F:manganese ion binding"/>
    <property type="evidence" value="ECO:0007669"/>
    <property type="project" value="TreeGrafter"/>
</dbReference>
<dbReference type="GO" id="GO:0016094">
    <property type="term" value="P:polyprenol biosynthetic process"/>
    <property type="evidence" value="ECO:0007669"/>
    <property type="project" value="TreeGrafter"/>
</dbReference>
<dbReference type="CDD" id="cd00475">
    <property type="entry name" value="Cis_IPPS"/>
    <property type="match status" value="1"/>
</dbReference>
<dbReference type="FunFam" id="3.40.1180.10:FF:000001">
    <property type="entry name" value="(2E,6E)-farnesyl-diphosphate-specific ditrans,polycis-undecaprenyl-diphosphate synthase"/>
    <property type="match status" value="1"/>
</dbReference>
<dbReference type="Gene3D" id="3.40.1180.10">
    <property type="entry name" value="Decaprenyl diphosphate synthase-like"/>
    <property type="match status" value="1"/>
</dbReference>
<dbReference type="HAMAP" id="MF_01139">
    <property type="entry name" value="ISPT"/>
    <property type="match status" value="1"/>
</dbReference>
<dbReference type="InterPro" id="IPR001441">
    <property type="entry name" value="UPP_synth-like"/>
</dbReference>
<dbReference type="InterPro" id="IPR018520">
    <property type="entry name" value="UPP_synth-like_CS"/>
</dbReference>
<dbReference type="InterPro" id="IPR036424">
    <property type="entry name" value="UPP_synth-like_sf"/>
</dbReference>
<dbReference type="NCBIfam" id="NF011405">
    <property type="entry name" value="PRK14830.1"/>
    <property type="match status" value="1"/>
</dbReference>
<dbReference type="NCBIfam" id="TIGR00055">
    <property type="entry name" value="uppS"/>
    <property type="match status" value="1"/>
</dbReference>
<dbReference type="PANTHER" id="PTHR10291:SF0">
    <property type="entry name" value="DEHYDRODOLICHYL DIPHOSPHATE SYNTHASE 2"/>
    <property type="match status" value="1"/>
</dbReference>
<dbReference type="PANTHER" id="PTHR10291">
    <property type="entry name" value="DEHYDRODOLICHYL DIPHOSPHATE SYNTHASE FAMILY MEMBER"/>
    <property type="match status" value="1"/>
</dbReference>
<dbReference type="Pfam" id="PF01255">
    <property type="entry name" value="Prenyltransf"/>
    <property type="match status" value="1"/>
</dbReference>
<dbReference type="SUPFAM" id="SSF64005">
    <property type="entry name" value="Undecaprenyl diphosphate synthase"/>
    <property type="match status" value="1"/>
</dbReference>
<dbReference type="PROSITE" id="PS01066">
    <property type="entry name" value="UPP_SYNTHASE"/>
    <property type="match status" value="1"/>
</dbReference>
<keyword id="KW-0460">Magnesium</keyword>
<keyword id="KW-0479">Metal-binding</keyword>
<keyword id="KW-0808">Transferase</keyword>
<feature type="chain" id="PRO_0000123567" description="Isoprenyl transferase">
    <location>
        <begin position="1"/>
        <end position="258"/>
    </location>
</feature>
<feature type="active site" evidence="1">
    <location>
        <position position="38"/>
    </location>
</feature>
<feature type="active site" description="Proton acceptor" evidence="1">
    <location>
        <position position="86"/>
    </location>
</feature>
<feature type="binding site" evidence="1">
    <location>
        <position position="38"/>
    </location>
    <ligand>
        <name>Mg(2+)</name>
        <dbReference type="ChEBI" id="CHEBI:18420"/>
    </ligand>
</feature>
<feature type="binding site" evidence="1">
    <location>
        <begin position="39"/>
        <end position="42"/>
    </location>
    <ligand>
        <name>substrate</name>
    </ligand>
</feature>
<feature type="binding site" evidence="1">
    <location>
        <position position="43"/>
    </location>
    <ligand>
        <name>substrate</name>
    </ligand>
</feature>
<feature type="binding site" evidence="1">
    <location>
        <position position="51"/>
    </location>
    <ligand>
        <name>substrate</name>
    </ligand>
</feature>
<feature type="binding site" evidence="1">
    <location>
        <position position="55"/>
    </location>
    <ligand>
        <name>substrate</name>
    </ligand>
</feature>
<feature type="binding site" evidence="1">
    <location>
        <begin position="83"/>
        <end position="85"/>
    </location>
    <ligand>
        <name>substrate</name>
    </ligand>
</feature>
<feature type="binding site" evidence="1">
    <location>
        <position position="87"/>
    </location>
    <ligand>
        <name>substrate</name>
    </ligand>
</feature>
<feature type="binding site" evidence="1">
    <location>
        <position position="89"/>
    </location>
    <ligand>
        <name>substrate</name>
    </ligand>
</feature>
<feature type="binding site" evidence="1">
    <location>
        <position position="206"/>
    </location>
    <ligand>
        <name>substrate</name>
    </ligand>
</feature>
<feature type="binding site" evidence="1">
    <location>
        <begin position="212"/>
        <end position="214"/>
    </location>
    <ligand>
        <name>substrate</name>
    </ligand>
</feature>
<feature type="binding site" evidence="1">
    <location>
        <position position="225"/>
    </location>
    <ligand>
        <name>Mg(2+)</name>
        <dbReference type="ChEBI" id="CHEBI:18420"/>
    </ligand>
</feature>
<evidence type="ECO:0000255" key="1">
    <source>
        <dbReference type="HAMAP-Rule" id="MF_01139"/>
    </source>
</evidence>
<protein>
    <recommendedName>
        <fullName evidence="1">Isoprenyl transferase</fullName>
        <ecNumber evidence="1">2.5.1.-</ecNumber>
    </recommendedName>
</protein>
<sequence length="258" mass="30230">MMFKNFPFFKGKKDTSFDHLVEEVKKGYIPEHIAIIMDGNGRWAKRRAMPRIAGHHEGMQVVKKITKFASKLNVKVLTLYAFSTENWKRPKKEVDYLMKLPEEFLGTFLPELIEENVQVRVIGQQDRLPTHTRRAMEKAMEETKENTGLILNFALNYGSRDEIVSAVQHMMKDREEGKVRVEDVSEEMLSSYLMTSSLPDPELLIRTSGELRISNFMLWQIAYSEFWFTDVYWPDFTEEHLLNAITDFQHRGRRFGGV</sequence>